<protein>
    <recommendedName>
        <fullName evidence="1">Dihydroorotase</fullName>
        <shortName evidence="1">DHOase</shortName>
        <ecNumber evidence="1">3.5.2.3</ecNumber>
    </recommendedName>
</protein>
<proteinExistence type="inferred from homology"/>
<feature type="chain" id="PRO_0000147275" description="Dihydroorotase">
    <location>
        <begin position="1"/>
        <end position="383"/>
    </location>
</feature>
<feature type="active site" evidence="1">
    <location>
        <position position="264"/>
    </location>
</feature>
<feature type="binding site" evidence="1">
    <location>
        <position position="47"/>
    </location>
    <ligand>
        <name>Zn(2+)</name>
        <dbReference type="ChEBI" id="CHEBI:29105"/>
        <label>1</label>
    </ligand>
</feature>
<feature type="binding site" evidence="1">
    <location>
        <begin position="49"/>
        <end position="51"/>
    </location>
    <ligand>
        <name>substrate</name>
    </ligand>
</feature>
<feature type="binding site" evidence="1">
    <location>
        <position position="49"/>
    </location>
    <ligand>
        <name>Zn(2+)</name>
        <dbReference type="ChEBI" id="CHEBI:29105"/>
        <label>1</label>
    </ligand>
</feature>
<feature type="binding site" evidence="1">
    <location>
        <position position="81"/>
    </location>
    <ligand>
        <name>substrate</name>
    </ligand>
</feature>
<feature type="binding site" evidence="1">
    <location>
        <position position="128"/>
    </location>
    <ligand>
        <name>Zn(2+)</name>
        <dbReference type="ChEBI" id="CHEBI:29105"/>
        <label>1</label>
    </ligand>
</feature>
<feature type="binding site" evidence="1">
    <location>
        <position position="128"/>
    </location>
    <ligand>
        <name>Zn(2+)</name>
        <dbReference type="ChEBI" id="CHEBI:29105"/>
        <label>2</label>
    </ligand>
</feature>
<feature type="binding site" evidence="1">
    <location>
        <position position="159"/>
    </location>
    <ligand>
        <name>Zn(2+)</name>
        <dbReference type="ChEBI" id="CHEBI:29105"/>
        <label>2</label>
    </ligand>
</feature>
<feature type="binding site" evidence="1">
    <location>
        <position position="198"/>
    </location>
    <ligand>
        <name>Zn(2+)</name>
        <dbReference type="ChEBI" id="CHEBI:29105"/>
        <label>2</label>
    </ligand>
</feature>
<feature type="binding site" evidence="1">
    <location>
        <position position="264"/>
    </location>
    <ligand>
        <name>Zn(2+)</name>
        <dbReference type="ChEBI" id="CHEBI:29105"/>
        <label>1</label>
    </ligand>
</feature>
<feature type="binding site" evidence="1">
    <location>
        <position position="268"/>
    </location>
    <ligand>
        <name>substrate</name>
    </ligand>
</feature>
<feature type="binding site" evidence="1">
    <location>
        <begin position="280"/>
        <end position="281"/>
    </location>
    <ligand>
        <name>substrate</name>
    </ligand>
</feature>
<feature type="modified residue" description="N6-carboxylysine" evidence="1">
    <location>
        <position position="128"/>
    </location>
</feature>
<sequence length="383" mass="42421">MLKECIKIEGRAFLGGKVTRVKLGSGECKTLQLSNKYLILPGMVDIHVHFRDWGLSHKETLRGGAAAALAGGVVAVGDMPNTKPHIRTADLYKKRLEEGSALPIIYKVHMGIPQDLEELRAARPPTIKIYPEDVEAFGWGHIEKAAEACASLGCRLVLHCEDPAYFKEGERPPIAELACVERTRQMAFKTGVKIHLTHITLSQTAEAARGWATVDATPHHLLLDVENCKDSGLCHVNPRLRTPEMRKRLLAAFASGLVDIYATDHAPHTLEEKRSGAPPPGICSLDVALSLLLTLWKRGVVTLSDVVRLYSHRPARFFDLQIDVKKGYFTVVRLEEFTVRGEEFAGTCKHTPFEGFKAFGRVFATSVGGRIYFKDGDVYMINI</sequence>
<keyword id="KW-0378">Hydrolase</keyword>
<keyword id="KW-0479">Metal-binding</keyword>
<keyword id="KW-0665">Pyrimidine biosynthesis</keyword>
<keyword id="KW-1185">Reference proteome</keyword>
<keyword id="KW-0862">Zinc</keyword>
<reference key="1">
    <citation type="journal article" date="2002" name="Proc. Natl. Acad. Sci. U.S.A.">
        <title>Genome sequence of the hyperthermophilic crenarchaeon Pyrobaculum aerophilum.</title>
        <authorList>
            <person name="Fitz-Gibbon S.T."/>
            <person name="Ladner H."/>
            <person name="Kim U.-J."/>
            <person name="Stetter K.O."/>
            <person name="Simon M.I."/>
            <person name="Miller J.H."/>
        </authorList>
    </citation>
    <scope>NUCLEOTIDE SEQUENCE [LARGE SCALE GENOMIC DNA]</scope>
    <source>
        <strain>ATCC 51768 / DSM 7523 / JCM 9630 / CIP 104966 / NBRC 100827 / IM2</strain>
    </source>
</reference>
<evidence type="ECO:0000255" key="1">
    <source>
        <dbReference type="HAMAP-Rule" id="MF_00220"/>
    </source>
</evidence>
<dbReference type="EC" id="3.5.2.3" evidence="1"/>
<dbReference type="EMBL" id="AE009441">
    <property type="protein sequence ID" value="AAL62714.1"/>
    <property type="molecule type" value="Genomic_DNA"/>
</dbReference>
<dbReference type="RefSeq" id="WP_011007186.1">
    <property type="nucleotide sequence ID" value="NC_003364.1"/>
</dbReference>
<dbReference type="SMR" id="Q8ZZC7"/>
<dbReference type="FunCoup" id="Q8ZZC7">
    <property type="interactions" value="70"/>
</dbReference>
<dbReference type="STRING" id="178306.PAE0322"/>
<dbReference type="EnsemblBacteria" id="AAL62714">
    <property type="protein sequence ID" value="AAL62714"/>
    <property type="gene ID" value="PAE0322"/>
</dbReference>
<dbReference type="GeneID" id="1464933"/>
<dbReference type="KEGG" id="pai:PAE0322"/>
<dbReference type="PATRIC" id="fig|178306.9.peg.245"/>
<dbReference type="eggNOG" id="arCOG00689">
    <property type="taxonomic scope" value="Archaea"/>
</dbReference>
<dbReference type="HOGENOM" id="CLU_015572_1_1_2"/>
<dbReference type="InParanoid" id="Q8ZZC7"/>
<dbReference type="UniPathway" id="UPA00070">
    <property type="reaction ID" value="UER00117"/>
</dbReference>
<dbReference type="Proteomes" id="UP000002439">
    <property type="component" value="Chromosome"/>
</dbReference>
<dbReference type="GO" id="GO:0005737">
    <property type="term" value="C:cytoplasm"/>
    <property type="evidence" value="ECO:0000318"/>
    <property type="project" value="GO_Central"/>
</dbReference>
<dbReference type="GO" id="GO:0004038">
    <property type="term" value="F:allantoinase activity"/>
    <property type="evidence" value="ECO:0000318"/>
    <property type="project" value="GO_Central"/>
</dbReference>
<dbReference type="GO" id="GO:0004151">
    <property type="term" value="F:dihydroorotase activity"/>
    <property type="evidence" value="ECO:0007669"/>
    <property type="project" value="UniProtKB-UniRule"/>
</dbReference>
<dbReference type="GO" id="GO:0008270">
    <property type="term" value="F:zinc ion binding"/>
    <property type="evidence" value="ECO:0007669"/>
    <property type="project" value="UniProtKB-UniRule"/>
</dbReference>
<dbReference type="GO" id="GO:0044205">
    <property type="term" value="P:'de novo' UMP biosynthetic process"/>
    <property type="evidence" value="ECO:0007669"/>
    <property type="project" value="UniProtKB-UniRule"/>
</dbReference>
<dbReference type="GO" id="GO:0006145">
    <property type="term" value="P:purine nucleobase catabolic process"/>
    <property type="evidence" value="ECO:0000318"/>
    <property type="project" value="GO_Central"/>
</dbReference>
<dbReference type="Gene3D" id="3.20.20.140">
    <property type="entry name" value="Metal-dependent hydrolases"/>
    <property type="match status" value="1"/>
</dbReference>
<dbReference type="HAMAP" id="MF_00220_A">
    <property type="entry name" value="PyrC_classI_A"/>
    <property type="match status" value="1"/>
</dbReference>
<dbReference type="InterPro" id="IPR006680">
    <property type="entry name" value="Amidohydro-rel"/>
</dbReference>
<dbReference type="InterPro" id="IPR004722">
    <property type="entry name" value="DHOase"/>
</dbReference>
<dbReference type="InterPro" id="IPR050138">
    <property type="entry name" value="DHOase/Allantoinase_Hydrolase"/>
</dbReference>
<dbReference type="InterPro" id="IPR002195">
    <property type="entry name" value="Dihydroorotase_CS"/>
</dbReference>
<dbReference type="InterPro" id="IPR011059">
    <property type="entry name" value="Metal-dep_hydrolase_composite"/>
</dbReference>
<dbReference type="InterPro" id="IPR032466">
    <property type="entry name" value="Metal_Hydrolase"/>
</dbReference>
<dbReference type="PANTHER" id="PTHR43668">
    <property type="entry name" value="ALLANTOINASE"/>
    <property type="match status" value="1"/>
</dbReference>
<dbReference type="PANTHER" id="PTHR43668:SF2">
    <property type="entry name" value="ALLANTOINASE"/>
    <property type="match status" value="1"/>
</dbReference>
<dbReference type="Pfam" id="PF01979">
    <property type="entry name" value="Amidohydro_1"/>
    <property type="match status" value="1"/>
</dbReference>
<dbReference type="SUPFAM" id="SSF51338">
    <property type="entry name" value="Composite domain of metallo-dependent hydrolases"/>
    <property type="match status" value="1"/>
</dbReference>
<dbReference type="SUPFAM" id="SSF51556">
    <property type="entry name" value="Metallo-dependent hydrolases"/>
    <property type="match status" value="1"/>
</dbReference>
<dbReference type="PROSITE" id="PS00483">
    <property type="entry name" value="DIHYDROOROTASE_2"/>
    <property type="match status" value="1"/>
</dbReference>
<comment type="function">
    <text evidence="1">Catalyzes the reversible cyclization of carbamoyl aspartate to dihydroorotate.</text>
</comment>
<comment type="catalytic activity">
    <reaction evidence="1">
        <text>(S)-dihydroorotate + H2O = N-carbamoyl-L-aspartate + H(+)</text>
        <dbReference type="Rhea" id="RHEA:24296"/>
        <dbReference type="ChEBI" id="CHEBI:15377"/>
        <dbReference type="ChEBI" id="CHEBI:15378"/>
        <dbReference type="ChEBI" id="CHEBI:30864"/>
        <dbReference type="ChEBI" id="CHEBI:32814"/>
        <dbReference type="EC" id="3.5.2.3"/>
    </reaction>
</comment>
<comment type="cofactor">
    <cofactor evidence="1">
        <name>Zn(2+)</name>
        <dbReference type="ChEBI" id="CHEBI:29105"/>
    </cofactor>
    <text evidence="1">Binds 2 Zn(2+) ions per subunit.</text>
</comment>
<comment type="pathway">
    <text evidence="1">Pyrimidine metabolism; UMP biosynthesis via de novo pathway; (S)-dihydroorotate from bicarbonate: step 3/3.</text>
</comment>
<comment type="similarity">
    <text evidence="1">Belongs to the metallo-dependent hydrolases superfamily. DHOase family. Class I DHOase subfamily.</text>
</comment>
<name>PYRC_PYRAE</name>
<gene>
    <name evidence="1" type="primary">pyrC</name>
    <name type="ordered locus">PAE0322</name>
</gene>
<accession>Q8ZZC7</accession>
<organism>
    <name type="scientific">Pyrobaculum aerophilum (strain ATCC 51768 / DSM 7523 / JCM 9630 / CIP 104966 / NBRC 100827 / IM2)</name>
    <dbReference type="NCBI Taxonomy" id="178306"/>
    <lineage>
        <taxon>Archaea</taxon>
        <taxon>Thermoproteota</taxon>
        <taxon>Thermoprotei</taxon>
        <taxon>Thermoproteales</taxon>
        <taxon>Thermoproteaceae</taxon>
        <taxon>Pyrobaculum</taxon>
    </lineage>
</organism>